<name>CYB_ALLVD</name>
<keyword id="KW-1003">Cell membrane</keyword>
<keyword id="KW-0249">Electron transport</keyword>
<keyword id="KW-0349">Heme</keyword>
<keyword id="KW-0408">Iron</keyword>
<keyword id="KW-0472">Membrane</keyword>
<keyword id="KW-0479">Metal-binding</keyword>
<keyword id="KW-1185">Reference proteome</keyword>
<keyword id="KW-0679">Respiratory chain</keyword>
<keyword id="KW-0812">Transmembrane</keyword>
<keyword id="KW-1133">Transmembrane helix</keyword>
<keyword id="KW-0813">Transport</keyword>
<accession>O31215</accession>
<accession>D3RUZ2</accession>
<proteinExistence type="inferred from homology"/>
<dbReference type="EMBL" id="AF034104">
    <property type="protein sequence ID" value="AAB86974.1"/>
    <property type="molecule type" value="Genomic_DNA"/>
</dbReference>
<dbReference type="EMBL" id="CP001896">
    <property type="protein sequence ID" value="ADC61041.1"/>
    <property type="molecule type" value="Genomic_DNA"/>
</dbReference>
<dbReference type="RefSeq" id="WP_012969317.1">
    <property type="nucleotide sequence ID" value="NC_013851.1"/>
</dbReference>
<dbReference type="SMR" id="O31215"/>
<dbReference type="STRING" id="572477.Alvin_0069"/>
<dbReference type="KEGG" id="alv:Alvin_0069"/>
<dbReference type="eggNOG" id="COG1290">
    <property type="taxonomic scope" value="Bacteria"/>
</dbReference>
<dbReference type="HOGENOM" id="CLU_031114_3_0_6"/>
<dbReference type="OrthoDB" id="9804503at2"/>
<dbReference type="Proteomes" id="UP000001441">
    <property type="component" value="Chromosome"/>
</dbReference>
<dbReference type="GO" id="GO:0005886">
    <property type="term" value="C:plasma membrane"/>
    <property type="evidence" value="ECO:0007669"/>
    <property type="project" value="UniProtKB-SubCell"/>
</dbReference>
<dbReference type="GO" id="GO:0045275">
    <property type="term" value="C:respiratory chain complex III"/>
    <property type="evidence" value="ECO:0007669"/>
    <property type="project" value="InterPro"/>
</dbReference>
<dbReference type="GO" id="GO:0046872">
    <property type="term" value="F:metal ion binding"/>
    <property type="evidence" value="ECO:0007669"/>
    <property type="project" value="UniProtKB-KW"/>
</dbReference>
<dbReference type="GO" id="GO:0008121">
    <property type="term" value="F:ubiquinol-cytochrome-c reductase activity"/>
    <property type="evidence" value="ECO:0007669"/>
    <property type="project" value="InterPro"/>
</dbReference>
<dbReference type="GO" id="GO:0022904">
    <property type="term" value="P:respiratory electron transport chain"/>
    <property type="evidence" value="ECO:0007669"/>
    <property type="project" value="InterPro"/>
</dbReference>
<dbReference type="CDD" id="cd00284">
    <property type="entry name" value="Cytochrome_b_N"/>
    <property type="match status" value="1"/>
</dbReference>
<dbReference type="FunFam" id="1.20.810.10:FF:000004">
    <property type="entry name" value="Cytochrome b"/>
    <property type="match status" value="1"/>
</dbReference>
<dbReference type="Gene3D" id="1.20.810.10">
    <property type="entry name" value="Cytochrome Bc1 Complex, Chain C"/>
    <property type="match status" value="1"/>
</dbReference>
<dbReference type="InterPro" id="IPR005798">
    <property type="entry name" value="Cyt_b/b6_C"/>
</dbReference>
<dbReference type="InterPro" id="IPR036150">
    <property type="entry name" value="Cyt_b/b6_C_sf"/>
</dbReference>
<dbReference type="InterPro" id="IPR005797">
    <property type="entry name" value="Cyt_b/b6_N"/>
</dbReference>
<dbReference type="InterPro" id="IPR027387">
    <property type="entry name" value="Cytb/b6-like_sf"/>
</dbReference>
<dbReference type="InterPro" id="IPR030689">
    <property type="entry name" value="Cytochrome_b"/>
</dbReference>
<dbReference type="InterPro" id="IPR048259">
    <property type="entry name" value="Cytochrome_b_N_euk/bac"/>
</dbReference>
<dbReference type="InterPro" id="IPR016174">
    <property type="entry name" value="Di-haem_cyt_TM"/>
</dbReference>
<dbReference type="PANTHER" id="PTHR19271">
    <property type="entry name" value="CYTOCHROME B"/>
    <property type="match status" value="1"/>
</dbReference>
<dbReference type="PANTHER" id="PTHR19271:SF16">
    <property type="entry name" value="CYTOCHROME B"/>
    <property type="match status" value="1"/>
</dbReference>
<dbReference type="Pfam" id="PF00032">
    <property type="entry name" value="Cytochrom_B_C"/>
    <property type="match status" value="1"/>
</dbReference>
<dbReference type="Pfam" id="PF00033">
    <property type="entry name" value="Cytochrome_B"/>
    <property type="match status" value="1"/>
</dbReference>
<dbReference type="PIRSF" id="PIRSF038885">
    <property type="entry name" value="COB"/>
    <property type="match status" value="1"/>
</dbReference>
<dbReference type="SUPFAM" id="SSF81648">
    <property type="entry name" value="a domain/subunit of cytochrome bc1 complex (Ubiquinol-cytochrome c reductase)"/>
    <property type="match status" value="1"/>
</dbReference>
<dbReference type="SUPFAM" id="SSF81342">
    <property type="entry name" value="Transmembrane di-heme cytochromes"/>
    <property type="match status" value="1"/>
</dbReference>
<dbReference type="PROSITE" id="PS51003">
    <property type="entry name" value="CYTB_CTER"/>
    <property type="match status" value="1"/>
</dbReference>
<dbReference type="PROSITE" id="PS51002">
    <property type="entry name" value="CYTB_NTER"/>
    <property type="match status" value="1"/>
</dbReference>
<organism>
    <name type="scientific">Allochromatium vinosum (strain ATCC 17899 / DSM 180 / NBRC 103801 / NCIMB 10441 / D)</name>
    <name type="common">Chromatium vinosum</name>
    <dbReference type="NCBI Taxonomy" id="572477"/>
    <lineage>
        <taxon>Bacteria</taxon>
        <taxon>Pseudomonadati</taxon>
        <taxon>Pseudomonadota</taxon>
        <taxon>Gammaproteobacteria</taxon>
        <taxon>Chromatiales</taxon>
        <taxon>Chromatiaceae</taxon>
        <taxon>Allochromatium</taxon>
    </lineage>
</organism>
<sequence>MSAEKTENLSWIDKRFPLSETWRNHLSEYYAPKNLNFWSFFGSLAILTLVIQIVTGVWLAMSYKPDAGLAFASVEYIMRDVDWGWLIRYMHSTGASMFFIVIYLHMFRGLLWGSYRKPRELLWMIGVVIYLVMMATAFFGYLLPWGQMSYWGAQVIVNLFAAVPVVGEDLSVWVRGDFVISDATLNRFFAFHFLLPFLLAGLVFLHIVALHHVGSNNPDGIEIKEGPKGNRWSDKAPADGIPFHPYYTVKDLMGVVVFLAIFGYVMFFNPTMGGLFLEAPNFQPANPMQTPAHIAPVWYFTPFYAMLRAVPPMYGSQFPGVVVMFAAILILFVLPWLDRSPVKSMRYKGPIFKWATGIFVVSFVALAWLGIQPASDFYTLLSQIFTVLYFAYFLLMPIYSSLDKTKPVPERVTS</sequence>
<protein>
    <recommendedName>
        <fullName>Cytochrome b</fullName>
    </recommendedName>
</protein>
<reference key="1">
    <citation type="journal article" date="1998" name="Photosyn. Res.">
        <title>The pet operon, encoding the prosthetic group-containing subunits of the cytochrome bc1 complex, of the purple sulfur bacterium Chromatium vinosum.</title>
        <authorList>
            <person name="Chen Y.L."/>
            <person name="Dincturk H.B."/>
            <person name="Qin H."/>
            <person name="Knaff D.B."/>
        </authorList>
    </citation>
    <scope>NUCLEOTIDE SEQUENCE [GENOMIC DNA]</scope>
</reference>
<reference key="2">
    <citation type="journal article" date="2011" name="Stand. Genomic Sci.">
        <title>Complete genome sequence of Allochromatium vinosum DSM 180(T).</title>
        <authorList>
            <person name="Weissgerber T."/>
            <person name="Zigann R."/>
            <person name="Bruce D."/>
            <person name="Chang Y.J."/>
            <person name="Detter J.C."/>
            <person name="Han C."/>
            <person name="Hauser L."/>
            <person name="Jeffries C.D."/>
            <person name="Land M."/>
            <person name="Munk A.C."/>
            <person name="Tapia R."/>
            <person name="Dahl C."/>
        </authorList>
    </citation>
    <scope>NUCLEOTIDE SEQUENCE [LARGE SCALE GENOMIC DNA]</scope>
    <source>
        <strain>ATCC 17899 / DSM 180 / NBRC 103801 / NCIMB 10441 / D</strain>
    </source>
</reference>
<comment type="function">
    <text evidence="1">Component of the ubiquinol-cytochrome c reductase complex (complex III or cytochrome b-c1 complex), which is a respiratory chain that generates an electrochemical potential coupled to ATP synthesis.</text>
</comment>
<comment type="cofactor">
    <cofactor evidence="1">
        <name>heme b</name>
        <dbReference type="ChEBI" id="CHEBI:60344"/>
    </cofactor>
    <text evidence="1">Binds 2 heme b groups non-covalently.</text>
</comment>
<comment type="subunit">
    <text evidence="1">The main subunits of complex b-c1 are: cytochrome b, cytochrome c1 and the Rieske protein.</text>
</comment>
<comment type="subcellular location">
    <subcellularLocation>
        <location evidence="5">Cell membrane</location>
        <topology evidence="5">Multi-pass membrane protein</topology>
    </subcellularLocation>
</comment>
<comment type="miscellaneous">
    <text evidence="1">Heme 1 (or BL or b562) is low-potential and absorbs at about 562 nm, and heme 2 (or BH or b566) is high-potential and absorbs at about 566 nm.</text>
</comment>
<comment type="similarity">
    <text evidence="3 4">Belongs to the cytochrome b family.</text>
</comment>
<gene>
    <name type="primary">petB</name>
    <name type="ordered locus">Alvin_0069</name>
</gene>
<evidence type="ECO:0000250" key="1"/>
<evidence type="ECO:0000255" key="2"/>
<evidence type="ECO:0000255" key="3">
    <source>
        <dbReference type="PROSITE-ProRule" id="PRU00967"/>
    </source>
</evidence>
<evidence type="ECO:0000255" key="4">
    <source>
        <dbReference type="PROSITE-ProRule" id="PRU00968"/>
    </source>
</evidence>
<evidence type="ECO:0000305" key="5"/>
<feature type="chain" id="PRO_0000061770" description="Cytochrome b">
    <location>
        <begin position="1"/>
        <end position="414"/>
    </location>
</feature>
<feature type="transmembrane region" description="Helical" evidence="2">
    <location>
        <begin position="40"/>
        <end position="60"/>
    </location>
</feature>
<feature type="transmembrane region" description="Helical" evidence="2">
    <location>
        <begin position="84"/>
        <end position="104"/>
    </location>
</feature>
<feature type="transmembrane region" description="Helical" evidence="2">
    <location>
        <begin position="121"/>
        <end position="141"/>
    </location>
</feature>
<feature type="transmembrane region" description="Helical" evidence="2">
    <location>
        <begin position="154"/>
        <end position="174"/>
    </location>
</feature>
<feature type="transmembrane region" description="Helical" evidence="2">
    <location>
        <begin position="188"/>
        <end position="208"/>
    </location>
</feature>
<feature type="transmembrane region" description="Helical" evidence="2">
    <location>
        <begin position="252"/>
        <end position="272"/>
    </location>
</feature>
<feature type="transmembrane region" description="Helical" evidence="2">
    <location>
        <begin position="294"/>
        <end position="314"/>
    </location>
</feature>
<feature type="transmembrane region" description="Helical" evidence="2">
    <location>
        <begin position="317"/>
        <end position="337"/>
    </location>
</feature>
<feature type="transmembrane region" description="Helical" evidence="2">
    <location>
        <begin position="351"/>
        <end position="371"/>
    </location>
</feature>
<feature type="transmembrane region" description="Helical" evidence="2">
    <location>
        <begin position="378"/>
        <end position="398"/>
    </location>
</feature>
<feature type="binding site" description="axial binding residue" evidence="4">
    <location>
        <position position="91"/>
    </location>
    <ligand>
        <name>heme b</name>
        <dbReference type="ChEBI" id="CHEBI:60344"/>
        <label>b562</label>
    </ligand>
    <ligandPart>
        <name>Fe</name>
        <dbReference type="ChEBI" id="CHEBI:18248"/>
    </ligandPart>
</feature>
<feature type="binding site" description="axial binding residue" evidence="4">
    <location>
        <position position="105"/>
    </location>
    <ligand>
        <name>heme b</name>
        <dbReference type="ChEBI" id="CHEBI:60344"/>
        <label>b566</label>
    </ligand>
    <ligandPart>
        <name>Fe</name>
        <dbReference type="ChEBI" id="CHEBI:18248"/>
    </ligandPart>
</feature>
<feature type="binding site" description="axial binding residue" evidence="4">
    <location>
        <position position="192"/>
    </location>
    <ligand>
        <name>heme b</name>
        <dbReference type="ChEBI" id="CHEBI:60344"/>
        <label>b562</label>
    </ligand>
    <ligandPart>
        <name>Fe</name>
        <dbReference type="ChEBI" id="CHEBI:18248"/>
    </ligandPart>
</feature>
<feature type="binding site" description="axial binding residue" evidence="4">
    <location>
        <position position="206"/>
    </location>
    <ligand>
        <name>heme b</name>
        <dbReference type="ChEBI" id="CHEBI:60344"/>
        <label>b566</label>
    </ligand>
    <ligandPart>
        <name>Fe</name>
        <dbReference type="ChEBI" id="CHEBI:18248"/>
    </ligandPart>
</feature>
<feature type="sequence conflict" description="In Ref. 1; AAB86974." evidence="5" ref="1">
    <original>W</original>
    <variation>R</variation>
    <location>
        <position position="112"/>
    </location>
</feature>
<feature type="sequence conflict" description="In Ref. 1; AAB86974." evidence="5" ref="1">
    <original>VPERVTS</original>
    <variation>FLRG</variation>
    <location>
        <begin position="408"/>
        <end position="414"/>
    </location>
</feature>